<dbReference type="EC" id="2.7.11.1"/>
<dbReference type="EMBL" id="M80675">
    <property type="protein sequence ID" value="AAA42545.1"/>
    <property type="molecule type" value="Genomic_DNA"/>
</dbReference>
<dbReference type="SMR" id="P31748"/>
<dbReference type="ChEMBL" id="CHEMBL3627590"/>
<dbReference type="ABCD" id="P31748">
    <property type="antibodies" value="1 sequenced antibody"/>
</dbReference>
<dbReference type="GO" id="GO:0005524">
    <property type="term" value="F:ATP binding"/>
    <property type="evidence" value="ECO:0007669"/>
    <property type="project" value="UniProtKB-KW"/>
</dbReference>
<dbReference type="GO" id="GO:0106310">
    <property type="term" value="F:protein serine kinase activity"/>
    <property type="evidence" value="ECO:0007669"/>
    <property type="project" value="RHEA"/>
</dbReference>
<dbReference type="GO" id="GO:0004674">
    <property type="term" value="F:protein serine/threonine kinase activity"/>
    <property type="evidence" value="ECO:0007669"/>
    <property type="project" value="UniProtKB-KW"/>
</dbReference>
<dbReference type="GO" id="GO:0060416">
    <property type="term" value="P:response to growth hormone"/>
    <property type="evidence" value="ECO:0000250"/>
    <property type="project" value="AgBase"/>
</dbReference>
<dbReference type="GO" id="GO:1990418">
    <property type="term" value="P:response to insulin-like growth factor stimulus"/>
    <property type="evidence" value="ECO:0000250"/>
    <property type="project" value="AgBase"/>
</dbReference>
<dbReference type="CDD" id="cd01241">
    <property type="entry name" value="PH_PKB"/>
    <property type="match status" value="1"/>
</dbReference>
<dbReference type="CDD" id="cd05594">
    <property type="entry name" value="STKc_PKB_alpha"/>
    <property type="match status" value="1"/>
</dbReference>
<dbReference type="FunFam" id="1.10.510.10:FF:000033">
    <property type="entry name" value="Non-specific serine/threonine protein kinase"/>
    <property type="match status" value="1"/>
</dbReference>
<dbReference type="FunFam" id="2.30.29.30:FF:000027">
    <property type="entry name" value="Non-specific serine/threonine protein kinase"/>
    <property type="match status" value="1"/>
</dbReference>
<dbReference type="FunFam" id="3.30.200.20:FF:000838">
    <property type="entry name" value="Non-specific serine/threonine protein kinase"/>
    <property type="match status" value="1"/>
</dbReference>
<dbReference type="Gene3D" id="3.30.200.20">
    <property type="entry name" value="Phosphorylase Kinase, domain 1"/>
    <property type="match status" value="1"/>
</dbReference>
<dbReference type="Gene3D" id="2.30.29.30">
    <property type="entry name" value="Pleckstrin-homology domain (PH domain)/Phosphotyrosine-binding domain (PTB)"/>
    <property type="match status" value="1"/>
</dbReference>
<dbReference type="Gene3D" id="1.10.510.10">
    <property type="entry name" value="Transferase(Phosphotransferase) domain 1"/>
    <property type="match status" value="1"/>
</dbReference>
<dbReference type="InterPro" id="IPR000961">
    <property type="entry name" value="AGC-kinase_C"/>
</dbReference>
<dbReference type="InterPro" id="IPR034676">
    <property type="entry name" value="Akt1"/>
</dbReference>
<dbReference type="InterPro" id="IPR011009">
    <property type="entry name" value="Kinase-like_dom_sf"/>
</dbReference>
<dbReference type="InterPro" id="IPR011993">
    <property type="entry name" value="PH-like_dom_sf"/>
</dbReference>
<dbReference type="InterPro" id="IPR001849">
    <property type="entry name" value="PH_domain"/>
</dbReference>
<dbReference type="InterPro" id="IPR039026">
    <property type="entry name" value="PH_PKB"/>
</dbReference>
<dbReference type="InterPro" id="IPR017892">
    <property type="entry name" value="Pkinase_C"/>
</dbReference>
<dbReference type="InterPro" id="IPR000719">
    <property type="entry name" value="Prot_kinase_dom"/>
</dbReference>
<dbReference type="InterPro" id="IPR017441">
    <property type="entry name" value="Protein_kinase_ATP_BS"/>
</dbReference>
<dbReference type="InterPro" id="IPR008271">
    <property type="entry name" value="Ser/Thr_kinase_AS"/>
</dbReference>
<dbReference type="PANTHER" id="PTHR24351">
    <property type="entry name" value="RIBOSOMAL PROTEIN S6 KINASE"/>
    <property type="match status" value="1"/>
</dbReference>
<dbReference type="Pfam" id="PF00169">
    <property type="entry name" value="PH"/>
    <property type="match status" value="1"/>
</dbReference>
<dbReference type="Pfam" id="PF00069">
    <property type="entry name" value="Pkinase"/>
    <property type="match status" value="1"/>
</dbReference>
<dbReference type="Pfam" id="PF00433">
    <property type="entry name" value="Pkinase_C"/>
    <property type="match status" value="1"/>
</dbReference>
<dbReference type="SMART" id="SM00233">
    <property type="entry name" value="PH"/>
    <property type="match status" value="1"/>
</dbReference>
<dbReference type="SMART" id="SM00133">
    <property type="entry name" value="S_TK_X"/>
    <property type="match status" value="1"/>
</dbReference>
<dbReference type="SMART" id="SM00220">
    <property type="entry name" value="S_TKc"/>
    <property type="match status" value="1"/>
</dbReference>
<dbReference type="SUPFAM" id="SSF50729">
    <property type="entry name" value="PH domain-like"/>
    <property type="match status" value="1"/>
</dbReference>
<dbReference type="SUPFAM" id="SSF56112">
    <property type="entry name" value="Protein kinase-like (PK-like)"/>
    <property type="match status" value="1"/>
</dbReference>
<dbReference type="PROSITE" id="PS51285">
    <property type="entry name" value="AGC_KINASE_CTER"/>
    <property type="match status" value="1"/>
</dbReference>
<dbReference type="PROSITE" id="PS50003">
    <property type="entry name" value="PH_DOMAIN"/>
    <property type="match status" value="1"/>
</dbReference>
<dbReference type="PROSITE" id="PS00107">
    <property type="entry name" value="PROTEIN_KINASE_ATP"/>
    <property type="match status" value="1"/>
</dbReference>
<dbReference type="PROSITE" id="PS50011">
    <property type="entry name" value="PROTEIN_KINASE_DOM"/>
    <property type="match status" value="1"/>
</dbReference>
<dbReference type="PROSITE" id="PS00108">
    <property type="entry name" value="PROTEIN_KINASE_ST"/>
    <property type="match status" value="1"/>
</dbReference>
<evidence type="ECO:0000250" key="1"/>
<evidence type="ECO:0000255" key="2">
    <source>
        <dbReference type="PROSITE-ProRule" id="PRU00145"/>
    </source>
</evidence>
<evidence type="ECO:0000255" key="3">
    <source>
        <dbReference type="PROSITE-ProRule" id="PRU00159"/>
    </source>
</evidence>
<evidence type="ECO:0000255" key="4">
    <source>
        <dbReference type="PROSITE-ProRule" id="PRU00618"/>
    </source>
</evidence>
<evidence type="ECO:0000255" key="5">
    <source>
        <dbReference type="PROSITE-ProRule" id="PRU10027"/>
    </source>
</evidence>
<evidence type="ECO:0000256" key="6">
    <source>
        <dbReference type="SAM" id="MobiDB-lite"/>
    </source>
</evidence>
<evidence type="ECO:0000269" key="7">
    <source>
    </source>
</evidence>
<evidence type="ECO:0000305" key="8"/>
<keyword id="KW-0067">ATP-binding</keyword>
<keyword id="KW-0945">Host-virus interaction</keyword>
<keyword id="KW-0418">Kinase</keyword>
<keyword id="KW-0547">Nucleotide-binding</keyword>
<keyword id="KW-0553">Oncogene</keyword>
<keyword id="KW-0597">Phosphoprotein</keyword>
<keyword id="KW-0723">Serine/threonine-protein kinase</keyword>
<keyword id="KW-0808">Transferase</keyword>
<feature type="chain" id="PRO_0000085614" description="AKT kinase-transforming protein">
    <location>
        <begin position="1"/>
        <end position="501"/>
    </location>
</feature>
<feature type="domain" description="PH" evidence="2">
    <location>
        <begin position="26"/>
        <end position="129"/>
    </location>
</feature>
<feature type="domain" description="Protein kinase" evidence="3">
    <location>
        <begin position="171"/>
        <end position="429"/>
    </location>
</feature>
<feature type="domain" description="AGC-kinase C-terminal" evidence="4">
    <location>
        <begin position="430"/>
        <end position="501"/>
    </location>
</feature>
<feature type="region of interest" description="Disordered" evidence="6">
    <location>
        <begin position="135"/>
        <end position="158"/>
    </location>
</feature>
<feature type="region of interest" description="Disordered" evidence="6">
    <location>
        <begin position="471"/>
        <end position="501"/>
    </location>
</feature>
<feature type="active site" description="Proton acceptor" evidence="3 5">
    <location>
        <position position="295"/>
    </location>
</feature>
<feature type="binding site" evidence="3">
    <location>
        <begin position="177"/>
        <end position="185"/>
    </location>
    <ligand>
        <name>ATP</name>
        <dbReference type="ChEBI" id="CHEBI:30616"/>
    </ligand>
</feature>
<feature type="binding site" evidence="3">
    <location>
        <position position="200"/>
    </location>
    <ligand>
        <name>ATP</name>
        <dbReference type="ChEBI" id="CHEBI:30616"/>
    </ligand>
</feature>
<feature type="modified residue" description="Phosphotyrosine" evidence="1">
    <location>
        <position position="347"/>
    </location>
</feature>
<gene>
    <name type="primary">V-AKT</name>
</gene>
<name>AKT_MLVAT</name>
<accession>P31748</accession>
<organismHost>
    <name type="scientific">Mus musculus</name>
    <name type="common">Mouse</name>
    <dbReference type="NCBI Taxonomy" id="10090"/>
</organismHost>
<organism>
    <name type="scientific">AKT8 murine leukemia virus</name>
    <dbReference type="NCBI Taxonomy" id="11790"/>
    <lineage>
        <taxon>Viruses</taxon>
        <taxon>Riboviria</taxon>
        <taxon>Pararnavirae</taxon>
        <taxon>Artverviricota</taxon>
        <taxon>Revtraviricetes</taxon>
        <taxon>Ortervirales</taxon>
        <taxon>Retroviridae</taxon>
        <taxon>Orthoretrovirinae</taxon>
        <taxon>Gammaretrovirus</taxon>
        <taxon>Murine leukemia virus</taxon>
    </lineage>
</organism>
<sequence>AREETLIIIPGLPLSLGATDTMNDVAIVKEGWLHKRGEYIKTWRPRYFLLKNDGTFIGYKERPQDVDQRESPLNNFSVAQCQLMKTERPRPNTFIIRCLQWTTVIERTFHVETPEEREEWATAIQTVADGLKRQEEETMDFRSGSPSDNSGAEEMEVSLAKPKHRVTMNEFEYLKLLGKGTFGKVILVKEKATGRYYAMKILKKEVIVAKDEVAHTLTENRVLQNSRHPFLTALKYSFQTHDRLCFVMEYANGGELFFHLSRERVFSEDRARFYGAEIVSALDYLHSEKNVVYRDLKLENLMLDKDGHIKITDFGLCKEGIKDGATMKTFCGTPEYLAPEVLEDNDYGRAVDWWGLGVVMYEMMCGRLPFYNQDHEKLFELILMEEIRFPRTLGPEAKSLLSGLLKKDPTQRLGGGSEDAKEIMQHRFFANIVWQDVYEKKLSPPFKPQVTSETDTRYFDEEFTAQMITITPPDQDDSMECVDSERRPHFPQFSYSASGTA</sequence>
<reference key="1">
    <citation type="journal article" date="1991" name="Science">
        <title>A retroviral oncogene, akt, encoding a serine-threonine kinase containing an SH2-like region.</title>
        <authorList>
            <person name="Bellacosa A."/>
            <person name="Testa J.R."/>
            <person name="Staal S.P."/>
            <person name="Tsichlis P.N."/>
        </authorList>
    </citation>
    <scope>NUCLEOTIDE SEQUENCE [GENOMIC DNA]</scope>
</reference>
<reference key="2">
    <citation type="journal article" date="2001" name="Science">
        <title>Carboxyl-terminal modulator protein (CTMP), a negative regulator of PKB/Akt and v-Akt at the plasma membrane.</title>
        <authorList>
            <person name="Maira S.-M."/>
            <person name="Galetic I."/>
            <person name="Brazil D.P."/>
            <person name="Kaech S."/>
            <person name="Ingley E."/>
            <person name="Thelen M."/>
            <person name="Hemmings B.A."/>
        </authorList>
    </citation>
    <scope>INTERACTION WITH THEM4</scope>
</reference>
<comment type="catalytic activity">
    <reaction>
        <text>L-seryl-[protein] + ATP = O-phospho-L-seryl-[protein] + ADP + H(+)</text>
        <dbReference type="Rhea" id="RHEA:17989"/>
        <dbReference type="Rhea" id="RHEA-COMP:9863"/>
        <dbReference type="Rhea" id="RHEA-COMP:11604"/>
        <dbReference type="ChEBI" id="CHEBI:15378"/>
        <dbReference type="ChEBI" id="CHEBI:29999"/>
        <dbReference type="ChEBI" id="CHEBI:30616"/>
        <dbReference type="ChEBI" id="CHEBI:83421"/>
        <dbReference type="ChEBI" id="CHEBI:456216"/>
        <dbReference type="EC" id="2.7.11.1"/>
    </reaction>
</comment>
<comment type="catalytic activity">
    <reaction>
        <text>L-threonyl-[protein] + ATP = O-phospho-L-threonyl-[protein] + ADP + H(+)</text>
        <dbReference type="Rhea" id="RHEA:46608"/>
        <dbReference type="Rhea" id="RHEA-COMP:11060"/>
        <dbReference type="Rhea" id="RHEA-COMP:11605"/>
        <dbReference type="ChEBI" id="CHEBI:15378"/>
        <dbReference type="ChEBI" id="CHEBI:30013"/>
        <dbReference type="ChEBI" id="CHEBI:30616"/>
        <dbReference type="ChEBI" id="CHEBI:61977"/>
        <dbReference type="ChEBI" id="CHEBI:456216"/>
        <dbReference type="EC" id="2.7.11.1"/>
    </reaction>
</comment>
<comment type="subunit">
    <text evidence="7">Interacts with mouse THEM4.</text>
</comment>
<comment type="domain">
    <text>The AGC-kinase C-terminal mediates interaction with THEM4.</text>
</comment>
<comment type="PTM">
    <text>Autophosphorylated on threonine and serine residues.</text>
</comment>
<comment type="miscellaneous">
    <text>This protein is synthesized as a Gag-Akt polyprotein.</text>
</comment>
<comment type="similarity">
    <text evidence="8">Belongs to the protein kinase superfamily. AGC Ser/Thr protein kinase family. RAC subfamily.</text>
</comment>
<protein>
    <recommendedName>
        <fullName>AKT kinase-transforming protein</fullName>
        <ecNumber>2.7.11.1</ecNumber>
    </recommendedName>
</protein>
<proteinExistence type="evidence at protein level"/>